<feature type="chain" id="PRO_0000150909" description="UPF0147 protein MK1586">
    <location>
        <begin position="1"/>
        <end position="104"/>
    </location>
</feature>
<reference key="1">
    <citation type="journal article" date="2002" name="Proc. Natl. Acad. Sci. U.S.A.">
        <title>The complete genome of hyperthermophile Methanopyrus kandleri AV19 and monophyly of archaeal methanogens.</title>
        <authorList>
            <person name="Slesarev A.I."/>
            <person name="Mezhevaya K.V."/>
            <person name="Makarova K.S."/>
            <person name="Polushin N.N."/>
            <person name="Shcherbinina O.V."/>
            <person name="Shakhova V.V."/>
            <person name="Belova G.I."/>
            <person name="Aravind L."/>
            <person name="Natale D.A."/>
            <person name="Rogozin I.B."/>
            <person name="Tatusov R.L."/>
            <person name="Wolf Y.I."/>
            <person name="Stetter K.O."/>
            <person name="Malykh A.G."/>
            <person name="Koonin E.V."/>
            <person name="Kozyavkin S.A."/>
        </authorList>
    </citation>
    <scope>NUCLEOTIDE SEQUENCE [LARGE SCALE GENOMIC DNA]</scope>
    <source>
        <strain>AV19 / DSM 6324 / JCM 9639 / NBRC 100938</strain>
    </source>
</reference>
<comment type="similarity">
    <text evidence="1">Belongs to the UPF0147 family.</text>
</comment>
<comment type="sequence caution" evidence="1">
    <conflict type="erroneous initiation">
        <sequence resource="EMBL-CDS" id="AAM02799"/>
    </conflict>
</comment>
<accession>Q8TV15</accession>
<dbReference type="EMBL" id="AE009439">
    <property type="protein sequence ID" value="AAM02799.1"/>
    <property type="status" value="ALT_INIT"/>
    <property type="molecule type" value="Genomic_DNA"/>
</dbReference>
<dbReference type="SMR" id="Q8TV15"/>
<dbReference type="FunCoup" id="Q8TV15">
    <property type="interactions" value="2"/>
</dbReference>
<dbReference type="STRING" id="190192.MK1586"/>
<dbReference type="PaxDb" id="190192-MK1586"/>
<dbReference type="EnsemblBacteria" id="AAM02799">
    <property type="protein sequence ID" value="AAM02799"/>
    <property type="gene ID" value="MK1586"/>
</dbReference>
<dbReference type="KEGG" id="mka:MK1586"/>
<dbReference type="HOGENOM" id="CLU_165882_0_1_2"/>
<dbReference type="InParanoid" id="Q8TV15"/>
<dbReference type="Proteomes" id="UP000001826">
    <property type="component" value="Chromosome"/>
</dbReference>
<dbReference type="Gene3D" id="1.20.1440.50">
    <property type="entry name" value="Ta0600-like"/>
    <property type="match status" value="1"/>
</dbReference>
<dbReference type="HAMAP" id="MF_00342">
    <property type="entry name" value="UPF0147"/>
    <property type="match status" value="1"/>
</dbReference>
<dbReference type="InterPro" id="IPR023130">
    <property type="entry name" value="Ta0600-like_sf"/>
</dbReference>
<dbReference type="InterPro" id="IPR005354">
    <property type="entry name" value="UPF0147"/>
</dbReference>
<dbReference type="NCBIfam" id="NF003319">
    <property type="entry name" value="PRK04330.1"/>
    <property type="match status" value="1"/>
</dbReference>
<dbReference type="Pfam" id="PF03685">
    <property type="entry name" value="UPF0147"/>
    <property type="match status" value="1"/>
</dbReference>
<dbReference type="SUPFAM" id="SSF158436">
    <property type="entry name" value="Ta0600-like"/>
    <property type="match status" value="1"/>
</dbReference>
<evidence type="ECO:0000305" key="1"/>
<gene>
    <name type="ordered locus">MK1586</name>
</gene>
<keyword id="KW-1185">Reference proteome</keyword>
<proteinExistence type="inferred from homology"/>
<name>Y1586_METKA</name>
<sequence>MSEARQQSSSEGGGDLSDYEEKFEQCCTLLEQRIIQDDQIPRNVRRAAKQAIEALKEEGQSPGVRASTAISTLEEVVNDQNTPEYARTVLLQVIATLEQVKDEV</sequence>
<protein>
    <recommendedName>
        <fullName>UPF0147 protein MK1586</fullName>
    </recommendedName>
</protein>
<organism>
    <name type="scientific">Methanopyrus kandleri (strain AV19 / DSM 6324 / JCM 9639 / NBRC 100938)</name>
    <dbReference type="NCBI Taxonomy" id="190192"/>
    <lineage>
        <taxon>Archaea</taxon>
        <taxon>Methanobacteriati</taxon>
        <taxon>Methanobacteriota</taxon>
        <taxon>Methanomada group</taxon>
        <taxon>Methanopyri</taxon>
        <taxon>Methanopyrales</taxon>
        <taxon>Methanopyraceae</taxon>
        <taxon>Methanopyrus</taxon>
    </lineage>
</organism>